<dbReference type="EMBL" id="Y17166">
    <property type="protein sequence ID" value="CAA76674.1"/>
    <property type="molecule type" value="Genomic_DNA"/>
</dbReference>
<dbReference type="EMBL" id="AL111168">
    <property type="protein sequence ID" value="CAL35188.1"/>
    <property type="molecule type" value="Genomic_DNA"/>
</dbReference>
<dbReference type="PIR" id="B81310">
    <property type="entry name" value="B81310"/>
</dbReference>
<dbReference type="RefSeq" id="WP_002865738.1">
    <property type="nucleotide sequence ID" value="NZ_SZUC01000001.1"/>
</dbReference>
<dbReference type="RefSeq" id="YP_002344464.1">
    <property type="nucleotide sequence ID" value="NC_002163.1"/>
</dbReference>
<dbReference type="SMR" id="O69302"/>
<dbReference type="IntAct" id="O69302">
    <property type="interactions" value="4"/>
</dbReference>
<dbReference type="STRING" id="192222.Cj1071"/>
<dbReference type="PaxDb" id="192222-Cj1071"/>
<dbReference type="EnsemblBacteria" id="CAL35188">
    <property type="protein sequence ID" value="CAL35188"/>
    <property type="gene ID" value="Cj1071"/>
</dbReference>
<dbReference type="GeneID" id="905362"/>
<dbReference type="KEGG" id="cje:Cj1071"/>
<dbReference type="PATRIC" id="fig|192222.6.peg.1053"/>
<dbReference type="eggNOG" id="COG0629">
    <property type="taxonomic scope" value="Bacteria"/>
</dbReference>
<dbReference type="HOGENOM" id="CLU_078758_0_1_7"/>
<dbReference type="OrthoDB" id="9809878at2"/>
<dbReference type="Proteomes" id="UP000000799">
    <property type="component" value="Chromosome"/>
</dbReference>
<dbReference type="GO" id="GO:0009295">
    <property type="term" value="C:nucleoid"/>
    <property type="evidence" value="ECO:0007669"/>
    <property type="project" value="TreeGrafter"/>
</dbReference>
<dbReference type="GO" id="GO:0003697">
    <property type="term" value="F:single-stranded DNA binding"/>
    <property type="evidence" value="ECO:0007669"/>
    <property type="project" value="UniProtKB-UniRule"/>
</dbReference>
<dbReference type="GO" id="GO:0006260">
    <property type="term" value="P:DNA replication"/>
    <property type="evidence" value="ECO:0007669"/>
    <property type="project" value="InterPro"/>
</dbReference>
<dbReference type="CDD" id="cd04496">
    <property type="entry name" value="SSB_OBF"/>
    <property type="match status" value="1"/>
</dbReference>
<dbReference type="Gene3D" id="2.40.50.140">
    <property type="entry name" value="Nucleic acid-binding proteins"/>
    <property type="match status" value="1"/>
</dbReference>
<dbReference type="HAMAP" id="MF_00984">
    <property type="entry name" value="SSB"/>
    <property type="match status" value="1"/>
</dbReference>
<dbReference type="InterPro" id="IPR012340">
    <property type="entry name" value="NA-bd_OB-fold"/>
</dbReference>
<dbReference type="InterPro" id="IPR000424">
    <property type="entry name" value="Primosome_PriB/ssb"/>
</dbReference>
<dbReference type="InterPro" id="IPR011344">
    <property type="entry name" value="ssDNA-bd"/>
</dbReference>
<dbReference type="NCBIfam" id="NF006297">
    <property type="entry name" value="PRK08486.1"/>
    <property type="match status" value="1"/>
</dbReference>
<dbReference type="NCBIfam" id="TIGR00621">
    <property type="entry name" value="ssb"/>
    <property type="match status" value="1"/>
</dbReference>
<dbReference type="PANTHER" id="PTHR10302">
    <property type="entry name" value="SINGLE-STRANDED DNA-BINDING PROTEIN"/>
    <property type="match status" value="1"/>
</dbReference>
<dbReference type="PANTHER" id="PTHR10302:SF27">
    <property type="entry name" value="SINGLE-STRANDED DNA-BINDING PROTEIN"/>
    <property type="match status" value="1"/>
</dbReference>
<dbReference type="Pfam" id="PF00436">
    <property type="entry name" value="SSB"/>
    <property type="match status" value="1"/>
</dbReference>
<dbReference type="PIRSF" id="PIRSF002070">
    <property type="entry name" value="SSB"/>
    <property type="match status" value="1"/>
</dbReference>
<dbReference type="SUPFAM" id="SSF50249">
    <property type="entry name" value="Nucleic acid-binding proteins"/>
    <property type="match status" value="1"/>
</dbReference>
<dbReference type="PROSITE" id="PS50935">
    <property type="entry name" value="SSB"/>
    <property type="match status" value="1"/>
</dbReference>
<protein>
    <recommendedName>
        <fullName evidence="1">Single-stranded DNA-binding protein</fullName>
        <shortName evidence="1">SSB</shortName>
    </recommendedName>
</protein>
<reference key="1">
    <citation type="journal article" date="1998" name="FEMS Microbiol. Lett.">
        <title>Cloning and expression of the Campylobacter jejuni lon gene detected by RNA arbitrarily primed PCR.</title>
        <authorList>
            <person name="Thies F.L."/>
            <person name="Hartung H.-P."/>
            <person name="Giegerich G."/>
        </authorList>
    </citation>
    <scope>NUCLEOTIDE SEQUENCE [GENOMIC DNA]</scope>
</reference>
<reference key="2">
    <citation type="journal article" date="2000" name="Nature">
        <title>The genome sequence of the food-borne pathogen Campylobacter jejuni reveals hypervariable sequences.</title>
        <authorList>
            <person name="Parkhill J."/>
            <person name="Wren B.W."/>
            <person name="Mungall K.L."/>
            <person name="Ketley J.M."/>
            <person name="Churcher C.M."/>
            <person name="Basham D."/>
            <person name="Chillingworth T."/>
            <person name="Davies R.M."/>
            <person name="Feltwell T."/>
            <person name="Holroyd S."/>
            <person name="Jagels K."/>
            <person name="Karlyshev A.V."/>
            <person name="Moule S."/>
            <person name="Pallen M.J."/>
            <person name="Penn C.W."/>
            <person name="Quail M.A."/>
            <person name="Rajandream M.A."/>
            <person name="Rutherford K.M."/>
            <person name="van Vliet A.H.M."/>
            <person name="Whitehead S."/>
            <person name="Barrell B.G."/>
        </authorList>
    </citation>
    <scope>NUCLEOTIDE SEQUENCE [LARGE SCALE GENOMIC DNA]</scope>
    <source>
        <strain>ATCC 700819 / NCTC 11168</strain>
    </source>
</reference>
<proteinExistence type="inferred from homology"/>
<gene>
    <name type="primary">ssb</name>
    <name type="ordered locus">Cj1071</name>
</gene>
<comment type="subunit">
    <text evidence="1">Homotetramer.</text>
</comment>
<evidence type="ECO:0000255" key="1">
    <source>
        <dbReference type="HAMAP-Rule" id="MF_00984"/>
    </source>
</evidence>
<evidence type="ECO:0000256" key="2">
    <source>
        <dbReference type="SAM" id="MobiDB-lite"/>
    </source>
</evidence>
<evidence type="ECO:0000305" key="3"/>
<organism>
    <name type="scientific">Campylobacter jejuni subsp. jejuni serotype O:2 (strain ATCC 700819 / NCTC 11168)</name>
    <dbReference type="NCBI Taxonomy" id="192222"/>
    <lineage>
        <taxon>Bacteria</taxon>
        <taxon>Pseudomonadati</taxon>
        <taxon>Campylobacterota</taxon>
        <taxon>Epsilonproteobacteria</taxon>
        <taxon>Campylobacterales</taxon>
        <taxon>Campylobacteraceae</taxon>
        <taxon>Campylobacter</taxon>
    </lineage>
</organism>
<feature type="chain" id="PRO_0000096020" description="Single-stranded DNA-binding protein">
    <location>
        <begin position="1"/>
        <end position="183"/>
    </location>
</feature>
<feature type="domain" description="SSB" evidence="1">
    <location>
        <begin position="1"/>
        <end position="105"/>
    </location>
</feature>
<feature type="region of interest" description="Disordered" evidence="2">
    <location>
        <begin position="108"/>
        <end position="183"/>
    </location>
</feature>
<feature type="compositionally biased region" description="Low complexity" evidence="2">
    <location>
        <begin position="111"/>
        <end position="135"/>
    </location>
</feature>
<feature type="compositionally biased region" description="Basic and acidic residues" evidence="2">
    <location>
        <begin position="161"/>
        <end position="170"/>
    </location>
</feature>
<feature type="compositionally biased region" description="Acidic residues" evidence="2">
    <location>
        <begin position="171"/>
        <end position="183"/>
    </location>
</feature>
<feature type="sequence conflict" description="In Ref. 1; CAA76674." evidence="3" ref="1">
    <original>S</original>
    <variation>N</variation>
    <location>
        <position position="159"/>
    </location>
</feature>
<keyword id="KW-0238">DNA-binding</keyword>
<keyword id="KW-1185">Reference proteome</keyword>
<accession>O69302</accession>
<accession>Q0P9I3</accession>
<accession>Q9PNM3</accession>
<sequence length="183" mass="20684">MFNKVVLVGNLTRDIEMRYAQSGSAIGASAIAVTRRFTANGEKREETCFIDISFYGRTAEVANQYLTKGSKVLIEGRLRFEQWSDQNGQNRSKHSIQVENMEMLGNSNAPQQGGNFGNNSFSNNNYSGNYENQSYDPYMSENQNFNKAKANPAPQRNQSPQHEEKLKEIDIDAYDSDDTNLPF</sequence>
<name>SSB_CAMJE</name>